<gene>
    <name evidence="1" type="primary">pyrG</name>
    <name type="ordered locus">LI0451</name>
</gene>
<proteinExistence type="inferred from homology"/>
<comment type="function">
    <text evidence="1">Catalyzes the ATP-dependent amination of UTP to CTP with either L-glutamine or ammonia as the source of nitrogen. Regulates intracellular CTP levels through interactions with the four ribonucleotide triphosphates.</text>
</comment>
<comment type="catalytic activity">
    <reaction evidence="1">
        <text>UTP + L-glutamine + ATP + H2O = CTP + L-glutamate + ADP + phosphate + 2 H(+)</text>
        <dbReference type="Rhea" id="RHEA:26426"/>
        <dbReference type="ChEBI" id="CHEBI:15377"/>
        <dbReference type="ChEBI" id="CHEBI:15378"/>
        <dbReference type="ChEBI" id="CHEBI:29985"/>
        <dbReference type="ChEBI" id="CHEBI:30616"/>
        <dbReference type="ChEBI" id="CHEBI:37563"/>
        <dbReference type="ChEBI" id="CHEBI:43474"/>
        <dbReference type="ChEBI" id="CHEBI:46398"/>
        <dbReference type="ChEBI" id="CHEBI:58359"/>
        <dbReference type="ChEBI" id="CHEBI:456216"/>
        <dbReference type="EC" id="6.3.4.2"/>
    </reaction>
</comment>
<comment type="catalytic activity">
    <reaction evidence="1">
        <text>L-glutamine + H2O = L-glutamate + NH4(+)</text>
        <dbReference type="Rhea" id="RHEA:15889"/>
        <dbReference type="ChEBI" id="CHEBI:15377"/>
        <dbReference type="ChEBI" id="CHEBI:28938"/>
        <dbReference type="ChEBI" id="CHEBI:29985"/>
        <dbReference type="ChEBI" id="CHEBI:58359"/>
    </reaction>
</comment>
<comment type="catalytic activity">
    <reaction evidence="1">
        <text>UTP + NH4(+) + ATP = CTP + ADP + phosphate + 2 H(+)</text>
        <dbReference type="Rhea" id="RHEA:16597"/>
        <dbReference type="ChEBI" id="CHEBI:15378"/>
        <dbReference type="ChEBI" id="CHEBI:28938"/>
        <dbReference type="ChEBI" id="CHEBI:30616"/>
        <dbReference type="ChEBI" id="CHEBI:37563"/>
        <dbReference type="ChEBI" id="CHEBI:43474"/>
        <dbReference type="ChEBI" id="CHEBI:46398"/>
        <dbReference type="ChEBI" id="CHEBI:456216"/>
    </reaction>
</comment>
<comment type="activity regulation">
    <text evidence="1">Allosterically activated by GTP, when glutamine is the substrate; GTP has no effect on the reaction when ammonia is the substrate. The allosteric effector GTP functions by stabilizing the protein conformation that binds the tetrahedral intermediate(s) formed during glutamine hydrolysis. Inhibited by the product CTP, via allosteric rather than competitive inhibition.</text>
</comment>
<comment type="pathway">
    <text evidence="1">Pyrimidine metabolism; CTP biosynthesis via de novo pathway; CTP from UDP: step 2/2.</text>
</comment>
<comment type="subunit">
    <text evidence="1">Homotetramer.</text>
</comment>
<comment type="miscellaneous">
    <text evidence="1">CTPSs have evolved a hybrid strategy for distinguishing between UTP and CTP. The overlapping regions of the product feedback inhibitory and substrate sites recognize a common feature in both compounds, the triphosphate moiety. To differentiate isosteric substrate and product pyrimidine rings, an additional pocket far from the expected kinase/ligase catalytic site, specifically recognizes the cytosine and ribose portions of the product inhibitor.</text>
</comment>
<comment type="similarity">
    <text evidence="1">Belongs to the CTP synthase family.</text>
</comment>
<sequence length="550" mass="61424">MKTKFIFITGGVLSSLGKGLSAASIGALLTSRGMTVTIQKLDPYINIDPGTMNPYQHGEVYVTDDGAEADLDLGHYERFLGTSLSQKNNSTSGAIYYKVISKERRGDYLGATVQVIPHITDEIKSTILSLAKSSIDNNTPDIAIIEIGGTIGDIEGLPFLEAIRQLQTDLGRQNCLYIHLTLVPYLGTAGEHKTKPTQHSVKELRSIGIQPNIILCRCEKPIPDDIKAKISLFCDVEKDAVFSAADINNIYELPLKFYTEGLDQKITSFLNLPTKQANLKPWEQLVNTINNPKGKVTITIVGKYVGLTEAYKSLHEALCHGGIANEITVDLQYVNSEIITEDNVNEIFKGVDGILVPGGFGSRGIEGKIESIRYARQKNIPFFGICLGMQCAVIEFARNVAGIEKANSEEFNPVAADKVIYLMKEWYDFRNNAIEYRDSLCDKGGTMRLGSYPCTLIKNTKAFKAYQTDSIEERHRHRYEFNNIYRDQFAEKGMIFSGTSPDNTLVEIIELLNHPWFIGCQFHPEFKSYPMKPHPLFKDFIHAACNHNKQ</sequence>
<reference key="1">
    <citation type="submission" date="2005-11" db="EMBL/GenBank/DDBJ databases">
        <title>The complete genome sequence of Lawsonia intracellularis: the causative agent of proliferative enteropathy.</title>
        <authorList>
            <person name="Kaur K."/>
            <person name="Zhang Q."/>
            <person name="Beckler D."/>
            <person name="Munir S."/>
            <person name="Li L."/>
            <person name="Kinsley K."/>
            <person name="Herron L."/>
            <person name="Peterson A."/>
            <person name="May B."/>
            <person name="Singh S."/>
            <person name="Gebhart C."/>
            <person name="Kapur V."/>
        </authorList>
    </citation>
    <scope>NUCLEOTIDE SEQUENCE [LARGE SCALE GENOMIC DNA]</scope>
    <source>
        <strain>PHE/MN1-00</strain>
    </source>
</reference>
<organism>
    <name type="scientific">Lawsonia intracellularis (strain PHE/MN1-00)</name>
    <dbReference type="NCBI Taxonomy" id="363253"/>
    <lineage>
        <taxon>Bacteria</taxon>
        <taxon>Pseudomonadati</taxon>
        <taxon>Thermodesulfobacteriota</taxon>
        <taxon>Desulfovibrionia</taxon>
        <taxon>Desulfovibrionales</taxon>
        <taxon>Desulfovibrionaceae</taxon>
        <taxon>Lawsonia</taxon>
    </lineage>
</organism>
<feature type="chain" id="PRO_0000266143" description="CTP synthase">
    <location>
        <begin position="1"/>
        <end position="550"/>
    </location>
</feature>
<feature type="domain" description="Glutamine amidotransferase type-1" evidence="1">
    <location>
        <begin position="297"/>
        <end position="550"/>
    </location>
</feature>
<feature type="region of interest" description="Amidoligase domain" evidence="1">
    <location>
        <begin position="1"/>
        <end position="272"/>
    </location>
</feature>
<feature type="active site" description="Nucleophile; for glutamine hydrolysis" evidence="1">
    <location>
        <position position="386"/>
    </location>
</feature>
<feature type="active site" evidence="1">
    <location>
        <position position="523"/>
    </location>
</feature>
<feature type="active site" evidence="1">
    <location>
        <position position="525"/>
    </location>
</feature>
<feature type="binding site" evidence="1">
    <location>
        <position position="14"/>
    </location>
    <ligand>
        <name>CTP</name>
        <dbReference type="ChEBI" id="CHEBI:37563"/>
        <note>allosteric inhibitor</note>
    </ligand>
</feature>
<feature type="binding site" evidence="1">
    <location>
        <position position="14"/>
    </location>
    <ligand>
        <name>UTP</name>
        <dbReference type="ChEBI" id="CHEBI:46398"/>
    </ligand>
</feature>
<feature type="binding site" evidence="1">
    <location>
        <begin position="15"/>
        <end position="20"/>
    </location>
    <ligand>
        <name>ATP</name>
        <dbReference type="ChEBI" id="CHEBI:30616"/>
    </ligand>
</feature>
<feature type="binding site" evidence="1">
    <location>
        <position position="55"/>
    </location>
    <ligand>
        <name>L-glutamine</name>
        <dbReference type="ChEBI" id="CHEBI:58359"/>
    </ligand>
</feature>
<feature type="binding site" evidence="1">
    <location>
        <position position="72"/>
    </location>
    <ligand>
        <name>ATP</name>
        <dbReference type="ChEBI" id="CHEBI:30616"/>
    </ligand>
</feature>
<feature type="binding site" evidence="1">
    <location>
        <position position="72"/>
    </location>
    <ligand>
        <name>Mg(2+)</name>
        <dbReference type="ChEBI" id="CHEBI:18420"/>
    </ligand>
</feature>
<feature type="binding site" evidence="1">
    <location>
        <position position="146"/>
    </location>
    <ligand>
        <name>Mg(2+)</name>
        <dbReference type="ChEBI" id="CHEBI:18420"/>
    </ligand>
</feature>
<feature type="binding site" evidence="1">
    <location>
        <begin position="153"/>
        <end position="155"/>
    </location>
    <ligand>
        <name>CTP</name>
        <dbReference type="ChEBI" id="CHEBI:37563"/>
        <note>allosteric inhibitor</note>
    </ligand>
</feature>
<feature type="binding site" evidence="1">
    <location>
        <begin position="193"/>
        <end position="198"/>
    </location>
    <ligand>
        <name>CTP</name>
        <dbReference type="ChEBI" id="CHEBI:37563"/>
        <note>allosteric inhibitor</note>
    </ligand>
</feature>
<feature type="binding site" evidence="1">
    <location>
        <begin position="193"/>
        <end position="198"/>
    </location>
    <ligand>
        <name>UTP</name>
        <dbReference type="ChEBI" id="CHEBI:46398"/>
    </ligand>
</feature>
<feature type="binding site" evidence="1">
    <location>
        <position position="229"/>
    </location>
    <ligand>
        <name>CTP</name>
        <dbReference type="ChEBI" id="CHEBI:37563"/>
        <note>allosteric inhibitor</note>
    </ligand>
</feature>
<feature type="binding site" evidence="1">
    <location>
        <position position="229"/>
    </location>
    <ligand>
        <name>UTP</name>
        <dbReference type="ChEBI" id="CHEBI:46398"/>
    </ligand>
</feature>
<feature type="binding site" evidence="1">
    <location>
        <position position="359"/>
    </location>
    <ligand>
        <name>L-glutamine</name>
        <dbReference type="ChEBI" id="CHEBI:58359"/>
    </ligand>
</feature>
<feature type="binding site" evidence="1">
    <location>
        <begin position="387"/>
        <end position="390"/>
    </location>
    <ligand>
        <name>L-glutamine</name>
        <dbReference type="ChEBI" id="CHEBI:58359"/>
    </ligand>
</feature>
<feature type="binding site" evidence="1">
    <location>
        <position position="410"/>
    </location>
    <ligand>
        <name>L-glutamine</name>
        <dbReference type="ChEBI" id="CHEBI:58359"/>
    </ligand>
</feature>
<feature type="binding site" evidence="1">
    <location>
        <position position="478"/>
    </location>
    <ligand>
        <name>L-glutamine</name>
        <dbReference type="ChEBI" id="CHEBI:58359"/>
    </ligand>
</feature>
<keyword id="KW-0067">ATP-binding</keyword>
<keyword id="KW-0315">Glutamine amidotransferase</keyword>
<keyword id="KW-0436">Ligase</keyword>
<keyword id="KW-0460">Magnesium</keyword>
<keyword id="KW-0479">Metal-binding</keyword>
<keyword id="KW-0547">Nucleotide-binding</keyword>
<keyword id="KW-0665">Pyrimidine biosynthesis</keyword>
<keyword id="KW-1185">Reference proteome</keyword>
<dbReference type="EC" id="6.3.4.2" evidence="1"/>
<dbReference type="EMBL" id="AM180252">
    <property type="protein sequence ID" value="CAJ54505.1"/>
    <property type="molecule type" value="Genomic_DNA"/>
</dbReference>
<dbReference type="RefSeq" id="WP_011526535.1">
    <property type="nucleotide sequence ID" value="NC_008011.1"/>
</dbReference>
<dbReference type="SMR" id="Q1MR71"/>
<dbReference type="STRING" id="363253.LI0451"/>
<dbReference type="MEROPS" id="C26.964"/>
<dbReference type="KEGG" id="lip:LI0451"/>
<dbReference type="eggNOG" id="COG0504">
    <property type="taxonomic scope" value="Bacteria"/>
</dbReference>
<dbReference type="HOGENOM" id="CLU_011675_5_0_7"/>
<dbReference type="OrthoDB" id="9801107at2"/>
<dbReference type="UniPathway" id="UPA00159">
    <property type="reaction ID" value="UER00277"/>
</dbReference>
<dbReference type="Proteomes" id="UP000002430">
    <property type="component" value="Chromosome"/>
</dbReference>
<dbReference type="GO" id="GO:0005829">
    <property type="term" value="C:cytosol"/>
    <property type="evidence" value="ECO:0007669"/>
    <property type="project" value="TreeGrafter"/>
</dbReference>
<dbReference type="GO" id="GO:0005524">
    <property type="term" value="F:ATP binding"/>
    <property type="evidence" value="ECO:0007669"/>
    <property type="project" value="UniProtKB-KW"/>
</dbReference>
<dbReference type="GO" id="GO:0003883">
    <property type="term" value="F:CTP synthase activity"/>
    <property type="evidence" value="ECO:0007669"/>
    <property type="project" value="UniProtKB-UniRule"/>
</dbReference>
<dbReference type="GO" id="GO:0004359">
    <property type="term" value="F:glutaminase activity"/>
    <property type="evidence" value="ECO:0007669"/>
    <property type="project" value="RHEA"/>
</dbReference>
<dbReference type="GO" id="GO:0042802">
    <property type="term" value="F:identical protein binding"/>
    <property type="evidence" value="ECO:0007669"/>
    <property type="project" value="TreeGrafter"/>
</dbReference>
<dbReference type="GO" id="GO:0046872">
    <property type="term" value="F:metal ion binding"/>
    <property type="evidence" value="ECO:0007669"/>
    <property type="project" value="UniProtKB-KW"/>
</dbReference>
<dbReference type="GO" id="GO:0044210">
    <property type="term" value="P:'de novo' CTP biosynthetic process"/>
    <property type="evidence" value="ECO:0007669"/>
    <property type="project" value="UniProtKB-UniRule"/>
</dbReference>
<dbReference type="GO" id="GO:0019856">
    <property type="term" value="P:pyrimidine nucleobase biosynthetic process"/>
    <property type="evidence" value="ECO:0007669"/>
    <property type="project" value="TreeGrafter"/>
</dbReference>
<dbReference type="CDD" id="cd03113">
    <property type="entry name" value="CTPS_N"/>
    <property type="match status" value="1"/>
</dbReference>
<dbReference type="CDD" id="cd01746">
    <property type="entry name" value="GATase1_CTP_Synthase"/>
    <property type="match status" value="1"/>
</dbReference>
<dbReference type="FunFam" id="3.40.50.300:FF:000009">
    <property type="entry name" value="CTP synthase"/>
    <property type="match status" value="1"/>
</dbReference>
<dbReference type="FunFam" id="3.40.50.880:FF:000002">
    <property type="entry name" value="CTP synthase"/>
    <property type="match status" value="1"/>
</dbReference>
<dbReference type="Gene3D" id="3.40.50.880">
    <property type="match status" value="1"/>
</dbReference>
<dbReference type="Gene3D" id="3.40.50.300">
    <property type="entry name" value="P-loop containing nucleotide triphosphate hydrolases"/>
    <property type="match status" value="1"/>
</dbReference>
<dbReference type="HAMAP" id="MF_01227">
    <property type="entry name" value="PyrG"/>
    <property type="match status" value="1"/>
</dbReference>
<dbReference type="InterPro" id="IPR029062">
    <property type="entry name" value="Class_I_gatase-like"/>
</dbReference>
<dbReference type="InterPro" id="IPR004468">
    <property type="entry name" value="CTP_synthase"/>
</dbReference>
<dbReference type="InterPro" id="IPR017456">
    <property type="entry name" value="CTP_synthase_N"/>
</dbReference>
<dbReference type="InterPro" id="IPR017926">
    <property type="entry name" value="GATASE"/>
</dbReference>
<dbReference type="InterPro" id="IPR033828">
    <property type="entry name" value="GATase1_CTP_Synthase"/>
</dbReference>
<dbReference type="InterPro" id="IPR027417">
    <property type="entry name" value="P-loop_NTPase"/>
</dbReference>
<dbReference type="NCBIfam" id="NF003792">
    <property type="entry name" value="PRK05380.1"/>
    <property type="match status" value="1"/>
</dbReference>
<dbReference type="NCBIfam" id="TIGR00337">
    <property type="entry name" value="PyrG"/>
    <property type="match status" value="1"/>
</dbReference>
<dbReference type="PANTHER" id="PTHR11550">
    <property type="entry name" value="CTP SYNTHASE"/>
    <property type="match status" value="1"/>
</dbReference>
<dbReference type="PANTHER" id="PTHR11550:SF0">
    <property type="entry name" value="CTP SYNTHASE-RELATED"/>
    <property type="match status" value="1"/>
</dbReference>
<dbReference type="Pfam" id="PF06418">
    <property type="entry name" value="CTP_synth_N"/>
    <property type="match status" value="1"/>
</dbReference>
<dbReference type="Pfam" id="PF00117">
    <property type="entry name" value="GATase"/>
    <property type="match status" value="1"/>
</dbReference>
<dbReference type="SUPFAM" id="SSF52317">
    <property type="entry name" value="Class I glutamine amidotransferase-like"/>
    <property type="match status" value="1"/>
</dbReference>
<dbReference type="SUPFAM" id="SSF52540">
    <property type="entry name" value="P-loop containing nucleoside triphosphate hydrolases"/>
    <property type="match status" value="1"/>
</dbReference>
<dbReference type="PROSITE" id="PS51273">
    <property type="entry name" value="GATASE_TYPE_1"/>
    <property type="match status" value="1"/>
</dbReference>
<accession>Q1MR71</accession>
<name>PYRG_LAWIP</name>
<evidence type="ECO:0000255" key="1">
    <source>
        <dbReference type="HAMAP-Rule" id="MF_01227"/>
    </source>
</evidence>
<protein>
    <recommendedName>
        <fullName evidence="1">CTP synthase</fullName>
        <ecNumber evidence="1">6.3.4.2</ecNumber>
    </recommendedName>
    <alternativeName>
        <fullName evidence="1">Cytidine 5'-triphosphate synthase</fullName>
    </alternativeName>
    <alternativeName>
        <fullName evidence="1">Cytidine triphosphate synthetase</fullName>
        <shortName evidence="1">CTP synthetase</shortName>
        <shortName evidence="1">CTPS</shortName>
    </alternativeName>
    <alternativeName>
        <fullName evidence="1">UTP--ammonia ligase</fullName>
    </alternativeName>
</protein>